<protein>
    <recommendedName>
        <fullName evidence="1">UDP-N-acetylmuramoyl-L-alanyl-D-glutamate--2,6-diaminopimelate ligase</fullName>
        <ecNumber evidence="1">6.3.2.13</ecNumber>
    </recommendedName>
    <alternativeName>
        <fullName evidence="1">Meso-A2pm-adding enzyme</fullName>
    </alternativeName>
    <alternativeName>
        <fullName evidence="1">Meso-diaminopimelate-adding enzyme</fullName>
    </alternativeName>
    <alternativeName>
        <fullName evidence="1">UDP-MurNAc-L-Ala-D-Glu:meso-diaminopimelate ligase</fullName>
    </alternativeName>
    <alternativeName>
        <fullName evidence="1">UDP-MurNAc-tripeptide synthetase</fullName>
    </alternativeName>
    <alternativeName>
        <fullName evidence="1">UDP-N-acetylmuramyl-tripeptide synthetase</fullName>
    </alternativeName>
</protein>
<sequence length="485" mass="55485">MNIFSGIEYKVLKDVNLDRKYDGIEYDSRKIKENYIFVAFEGANVDGHNYIDSAVKNGATCIIVSKKVEMKHNVSYILIDDIRHKLGYIASNFYEWPQRKLKIIGVTGTNGKTSSTYMIEKLMGDIPITRIGTIEYKIGDKVFEAVNTTPESLDLIKIFDKTLKKKIEYVIMEVSSHSLEIGRVEVLDFDYALFTNLTQDHLDYHLTMENYFQAKRKLFLKLKDINNSVINVDDEYGKRLYDEFIVDNPEIISYGIENGDLEGDYSDDGYIDVKYKNQIEKVKFSLLGDFNLYNTLGAIGIALKIGISMEEILKRVSNIKAAPGRFEALDCGQDYKVIVDYAHTPDALVNVIVAARNIKNGSRIITIFGCGGDRDRTKRPIMAKVAEDLSDVVILTSDNPRTESPEQIFDDVKKGFIKSDDYFFEPDREKAIKLAINMAEKNDIILITGKGHETYHIIGTKKWHFDDKEIARREIVRRKMVENVN</sequence>
<reference key="1">
    <citation type="journal article" date="2002" name="J. Bacteriol.">
        <title>Genome sequence and analysis of the oral bacterium Fusobacterium nucleatum strain ATCC 25586.</title>
        <authorList>
            <person name="Kapatral V."/>
            <person name="Anderson I."/>
            <person name="Ivanova N."/>
            <person name="Reznik G."/>
            <person name="Los T."/>
            <person name="Lykidis A."/>
            <person name="Bhattacharyya A."/>
            <person name="Bartman A."/>
            <person name="Gardner W."/>
            <person name="Grechkin G."/>
            <person name="Zhu L."/>
            <person name="Vasieva O."/>
            <person name="Chu L."/>
            <person name="Kogan Y."/>
            <person name="Chaga O."/>
            <person name="Goltsman E."/>
            <person name="Bernal A."/>
            <person name="Larsen N."/>
            <person name="D'Souza M."/>
            <person name="Walunas T."/>
            <person name="Pusch G."/>
            <person name="Haselkorn R."/>
            <person name="Fonstein M."/>
            <person name="Kyrpides N.C."/>
            <person name="Overbeek R."/>
        </authorList>
    </citation>
    <scope>NUCLEOTIDE SEQUENCE [LARGE SCALE GENOMIC DNA]</scope>
    <source>
        <strain>ATCC 25586 / DSM 15643 / BCRC 10681 / CIP 101130 / JCM 8532 / KCTC 2640 / LMG 13131 / VPI 4355</strain>
    </source>
</reference>
<name>MURE_FUSNN</name>
<accession>Q8R635</accession>
<comment type="function">
    <text evidence="1">Catalyzes the addition of meso-diaminopimelic acid to the nucleotide precursor UDP-N-acetylmuramoyl-L-alanyl-D-glutamate (UMAG) in the biosynthesis of bacterial cell-wall peptidoglycan.</text>
</comment>
<comment type="catalytic activity">
    <reaction evidence="1">
        <text>UDP-N-acetyl-alpha-D-muramoyl-L-alanyl-D-glutamate + meso-2,6-diaminopimelate + ATP = UDP-N-acetyl-alpha-D-muramoyl-L-alanyl-gamma-D-glutamyl-meso-2,6-diaminopimelate + ADP + phosphate + H(+)</text>
        <dbReference type="Rhea" id="RHEA:23676"/>
        <dbReference type="ChEBI" id="CHEBI:15378"/>
        <dbReference type="ChEBI" id="CHEBI:30616"/>
        <dbReference type="ChEBI" id="CHEBI:43474"/>
        <dbReference type="ChEBI" id="CHEBI:57791"/>
        <dbReference type="ChEBI" id="CHEBI:83900"/>
        <dbReference type="ChEBI" id="CHEBI:83905"/>
        <dbReference type="ChEBI" id="CHEBI:456216"/>
        <dbReference type="EC" id="6.3.2.13"/>
    </reaction>
</comment>
<comment type="cofactor">
    <cofactor evidence="1">
        <name>Mg(2+)</name>
        <dbReference type="ChEBI" id="CHEBI:18420"/>
    </cofactor>
</comment>
<comment type="pathway">
    <text evidence="1">Cell wall biogenesis; peptidoglycan biosynthesis.</text>
</comment>
<comment type="subcellular location">
    <subcellularLocation>
        <location evidence="1">Cytoplasm</location>
    </subcellularLocation>
</comment>
<comment type="PTM">
    <text evidence="1">Carboxylation is probably crucial for Mg(2+) binding and, consequently, for the gamma-phosphate positioning of ATP.</text>
</comment>
<comment type="similarity">
    <text evidence="1">Belongs to the MurCDEF family. MurE subfamily.</text>
</comment>
<evidence type="ECO:0000255" key="1">
    <source>
        <dbReference type="HAMAP-Rule" id="MF_00208"/>
    </source>
</evidence>
<feature type="chain" id="PRO_0000101897" description="UDP-N-acetylmuramoyl-L-alanyl-D-glutamate--2,6-diaminopimelate ligase">
    <location>
        <begin position="1"/>
        <end position="485"/>
    </location>
</feature>
<feature type="short sequence motif" description="Meso-diaminopimelate recognition motif">
    <location>
        <begin position="398"/>
        <end position="401"/>
    </location>
</feature>
<feature type="binding site" evidence="1">
    <location>
        <position position="28"/>
    </location>
    <ligand>
        <name>UDP-N-acetyl-alpha-D-muramoyl-L-alanyl-D-glutamate</name>
        <dbReference type="ChEBI" id="CHEBI:83900"/>
    </ligand>
</feature>
<feature type="binding site" evidence="1">
    <location>
        <begin position="108"/>
        <end position="114"/>
    </location>
    <ligand>
        <name>ATP</name>
        <dbReference type="ChEBI" id="CHEBI:30616"/>
    </ligand>
</feature>
<feature type="binding site" evidence="1">
    <location>
        <position position="147"/>
    </location>
    <ligand>
        <name>UDP-N-acetyl-alpha-D-muramoyl-L-alanyl-D-glutamate</name>
        <dbReference type="ChEBI" id="CHEBI:83900"/>
    </ligand>
</feature>
<feature type="binding site" evidence="1">
    <location>
        <begin position="148"/>
        <end position="149"/>
    </location>
    <ligand>
        <name>UDP-N-acetyl-alpha-D-muramoyl-L-alanyl-D-glutamate</name>
        <dbReference type="ChEBI" id="CHEBI:83900"/>
    </ligand>
</feature>
<feature type="binding site" evidence="1">
    <location>
        <position position="175"/>
    </location>
    <ligand>
        <name>UDP-N-acetyl-alpha-D-muramoyl-L-alanyl-D-glutamate</name>
        <dbReference type="ChEBI" id="CHEBI:83900"/>
    </ligand>
</feature>
<feature type="binding site" evidence="1">
    <location>
        <position position="183"/>
    </location>
    <ligand>
        <name>UDP-N-acetyl-alpha-D-muramoyl-L-alanyl-D-glutamate</name>
        <dbReference type="ChEBI" id="CHEBI:83900"/>
    </ligand>
</feature>
<feature type="binding site" evidence="1">
    <location>
        <position position="374"/>
    </location>
    <ligand>
        <name>meso-2,6-diaminopimelate</name>
        <dbReference type="ChEBI" id="CHEBI:57791"/>
    </ligand>
</feature>
<feature type="binding site" evidence="1">
    <location>
        <begin position="398"/>
        <end position="401"/>
    </location>
    <ligand>
        <name>meso-2,6-diaminopimelate</name>
        <dbReference type="ChEBI" id="CHEBI:57791"/>
    </ligand>
</feature>
<feature type="binding site" evidence="1">
    <location>
        <position position="449"/>
    </location>
    <ligand>
        <name>meso-2,6-diaminopimelate</name>
        <dbReference type="ChEBI" id="CHEBI:57791"/>
    </ligand>
</feature>
<feature type="binding site" evidence="1">
    <location>
        <position position="453"/>
    </location>
    <ligand>
        <name>meso-2,6-diaminopimelate</name>
        <dbReference type="ChEBI" id="CHEBI:57791"/>
    </ligand>
</feature>
<feature type="modified residue" description="N6-carboxylysine" evidence="1">
    <location>
        <position position="215"/>
    </location>
</feature>
<gene>
    <name evidence="1" type="primary">murE</name>
    <name type="ordered locus">FN1225</name>
</gene>
<organism>
    <name type="scientific">Fusobacterium nucleatum subsp. nucleatum (strain ATCC 25586 / DSM 15643 / BCRC 10681 / CIP 101130 / JCM 8532 / KCTC 2640 / LMG 13131 / VPI 4355)</name>
    <dbReference type="NCBI Taxonomy" id="190304"/>
    <lineage>
        <taxon>Bacteria</taxon>
        <taxon>Fusobacteriati</taxon>
        <taxon>Fusobacteriota</taxon>
        <taxon>Fusobacteriia</taxon>
        <taxon>Fusobacteriales</taxon>
        <taxon>Fusobacteriaceae</taxon>
        <taxon>Fusobacterium</taxon>
    </lineage>
</organism>
<proteinExistence type="inferred from homology"/>
<keyword id="KW-0067">ATP-binding</keyword>
<keyword id="KW-0131">Cell cycle</keyword>
<keyword id="KW-0132">Cell division</keyword>
<keyword id="KW-0133">Cell shape</keyword>
<keyword id="KW-0961">Cell wall biogenesis/degradation</keyword>
<keyword id="KW-0963">Cytoplasm</keyword>
<keyword id="KW-0436">Ligase</keyword>
<keyword id="KW-0460">Magnesium</keyword>
<keyword id="KW-0547">Nucleotide-binding</keyword>
<keyword id="KW-0573">Peptidoglycan synthesis</keyword>
<keyword id="KW-1185">Reference proteome</keyword>
<dbReference type="EC" id="6.3.2.13" evidence="1"/>
<dbReference type="EMBL" id="AE009951">
    <property type="protein sequence ID" value="AAL95421.1"/>
    <property type="molecule type" value="Genomic_DNA"/>
</dbReference>
<dbReference type="RefSeq" id="NP_604122.1">
    <property type="nucleotide sequence ID" value="NC_003454.1"/>
</dbReference>
<dbReference type="RefSeq" id="WP_011016996.1">
    <property type="nucleotide sequence ID" value="NZ_CP028101.1"/>
</dbReference>
<dbReference type="SMR" id="Q8R635"/>
<dbReference type="FunCoup" id="Q8R635">
    <property type="interactions" value="378"/>
</dbReference>
<dbReference type="STRING" id="190304.FN1225"/>
<dbReference type="PaxDb" id="190304-FN1225"/>
<dbReference type="EnsemblBacteria" id="AAL95421">
    <property type="protein sequence ID" value="AAL95421"/>
    <property type="gene ID" value="FN1225"/>
</dbReference>
<dbReference type="GeneID" id="79784202"/>
<dbReference type="KEGG" id="fnu:FN1225"/>
<dbReference type="PATRIC" id="fig|190304.8.peg.1788"/>
<dbReference type="eggNOG" id="COG0769">
    <property type="taxonomic scope" value="Bacteria"/>
</dbReference>
<dbReference type="HOGENOM" id="CLU_022291_4_1_0"/>
<dbReference type="InParanoid" id="Q8R635"/>
<dbReference type="BioCyc" id="FNUC190304:G1FZS-1802-MONOMER"/>
<dbReference type="UniPathway" id="UPA00219"/>
<dbReference type="Proteomes" id="UP000002521">
    <property type="component" value="Chromosome"/>
</dbReference>
<dbReference type="GO" id="GO:0005737">
    <property type="term" value="C:cytoplasm"/>
    <property type="evidence" value="ECO:0007669"/>
    <property type="project" value="UniProtKB-SubCell"/>
</dbReference>
<dbReference type="GO" id="GO:0005524">
    <property type="term" value="F:ATP binding"/>
    <property type="evidence" value="ECO:0007669"/>
    <property type="project" value="UniProtKB-UniRule"/>
</dbReference>
<dbReference type="GO" id="GO:0000287">
    <property type="term" value="F:magnesium ion binding"/>
    <property type="evidence" value="ECO:0007669"/>
    <property type="project" value="UniProtKB-UniRule"/>
</dbReference>
<dbReference type="GO" id="GO:0008765">
    <property type="term" value="F:UDP-N-acetylmuramoylalanyl-D-glutamate-2,6-diaminopimelate ligase activity"/>
    <property type="evidence" value="ECO:0007669"/>
    <property type="project" value="UniProtKB-UniRule"/>
</dbReference>
<dbReference type="GO" id="GO:0051301">
    <property type="term" value="P:cell division"/>
    <property type="evidence" value="ECO:0007669"/>
    <property type="project" value="UniProtKB-KW"/>
</dbReference>
<dbReference type="GO" id="GO:0071555">
    <property type="term" value="P:cell wall organization"/>
    <property type="evidence" value="ECO:0007669"/>
    <property type="project" value="UniProtKB-KW"/>
</dbReference>
<dbReference type="GO" id="GO:0009252">
    <property type="term" value="P:peptidoglycan biosynthetic process"/>
    <property type="evidence" value="ECO:0007669"/>
    <property type="project" value="UniProtKB-UniRule"/>
</dbReference>
<dbReference type="GO" id="GO:0008360">
    <property type="term" value="P:regulation of cell shape"/>
    <property type="evidence" value="ECO:0007669"/>
    <property type="project" value="UniProtKB-KW"/>
</dbReference>
<dbReference type="Gene3D" id="3.90.190.20">
    <property type="entry name" value="Mur ligase, C-terminal domain"/>
    <property type="match status" value="1"/>
</dbReference>
<dbReference type="Gene3D" id="3.40.1190.10">
    <property type="entry name" value="Mur-like, catalytic domain"/>
    <property type="match status" value="1"/>
</dbReference>
<dbReference type="Gene3D" id="3.40.1390.10">
    <property type="entry name" value="MurE/MurF, N-terminal domain"/>
    <property type="match status" value="1"/>
</dbReference>
<dbReference type="HAMAP" id="MF_00208">
    <property type="entry name" value="MurE"/>
    <property type="match status" value="1"/>
</dbReference>
<dbReference type="InterPro" id="IPR036565">
    <property type="entry name" value="Mur-like_cat_sf"/>
</dbReference>
<dbReference type="InterPro" id="IPR004101">
    <property type="entry name" value="Mur_ligase_C"/>
</dbReference>
<dbReference type="InterPro" id="IPR036615">
    <property type="entry name" value="Mur_ligase_C_dom_sf"/>
</dbReference>
<dbReference type="InterPro" id="IPR013221">
    <property type="entry name" value="Mur_ligase_cen"/>
</dbReference>
<dbReference type="InterPro" id="IPR000713">
    <property type="entry name" value="Mur_ligase_N"/>
</dbReference>
<dbReference type="InterPro" id="IPR035911">
    <property type="entry name" value="MurE/MurF_N"/>
</dbReference>
<dbReference type="InterPro" id="IPR005761">
    <property type="entry name" value="UDP-N-AcMur-Glu-dNH2Pim_ligase"/>
</dbReference>
<dbReference type="NCBIfam" id="TIGR01085">
    <property type="entry name" value="murE"/>
    <property type="match status" value="1"/>
</dbReference>
<dbReference type="NCBIfam" id="NF001126">
    <property type="entry name" value="PRK00139.1-4"/>
    <property type="match status" value="1"/>
</dbReference>
<dbReference type="PANTHER" id="PTHR23135">
    <property type="entry name" value="MUR LIGASE FAMILY MEMBER"/>
    <property type="match status" value="1"/>
</dbReference>
<dbReference type="PANTHER" id="PTHR23135:SF4">
    <property type="entry name" value="UDP-N-ACETYLMURAMOYL-L-ALANYL-D-GLUTAMATE--2,6-DIAMINOPIMELATE LIGASE MURE HOMOLOG, CHLOROPLASTIC"/>
    <property type="match status" value="1"/>
</dbReference>
<dbReference type="Pfam" id="PF01225">
    <property type="entry name" value="Mur_ligase"/>
    <property type="match status" value="1"/>
</dbReference>
<dbReference type="Pfam" id="PF02875">
    <property type="entry name" value="Mur_ligase_C"/>
    <property type="match status" value="1"/>
</dbReference>
<dbReference type="Pfam" id="PF08245">
    <property type="entry name" value="Mur_ligase_M"/>
    <property type="match status" value="1"/>
</dbReference>
<dbReference type="SUPFAM" id="SSF53623">
    <property type="entry name" value="MurD-like peptide ligases, catalytic domain"/>
    <property type="match status" value="1"/>
</dbReference>
<dbReference type="SUPFAM" id="SSF53244">
    <property type="entry name" value="MurD-like peptide ligases, peptide-binding domain"/>
    <property type="match status" value="1"/>
</dbReference>
<dbReference type="SUPFAM" id="SSF63418">
    <property type="entry name" value="MurE/MurF N-terminal domain"/>
    <property type="match status" value="1"/>
</dbReference>